<proteinExistence type="inferred from homology"/>
<sequence length="143" mass="16401">MRLEKSLVLIKPDAVERNLIGKILEVYEGAGLKIKAMEMKQINKEFAEKHYEEHRDKQFFNSLIKYITRSPLVALILEGEDAINKIRSLNGATNPEKAEFGTIRRRFALSGTENSVHASDSIESAEKEIKLWFPKVFYEEICG</sequence>
<evidence type="ECO:0000255" key="1">
    <source>
        <dbReference type="HAMAP-Rule" id="MF_00451"/>
    </source>
</evidence>
<dbReference type="EC" id="2.7.4.6" evidence="1"/>
<dbReference type="EMBL" id="BA000016">
    <property type="protein sequence ID" value="BAB81678.1"/>
    <property type="molecule type" value="Genomic_DNA"/>
</dbReference>
<dbReference type="RefSeq" id="WP_003451216.1">
    <property type="nucleotide sequence ID" value="NC_003366.1"/>
</dbReference>
<dbReference type="SMR" id="Q8XIZ1"/>
<dbReference type="STRING" id="195102.gene:10491241"/>
<dbReference type="KEGG" id="cpe:CPE1972"/>
<dbReference type="HOGENOM" id="CLU_060216_6_3_9"/>
<dbReference type="Proteomes" id="UP000000818">
    <property type="component" value="Chromosome"/>
</dbReference>
<dbReference type="GO" id="GO:0005737">
    <property type="term" value="C:cytoplasm"/>
    <property type="evidence" value="ECO:0007669"/>
    <property type="project" value="UniProtKB-SubCell"/>
</dbReference>
<dbReference type="GO" id="GO:0005524">
    <property type="term" value="F:ATP binding"/>
    <property type="evidence" value="ECO:0007669"/>
    <property type="project" value="UniProtKB-UniRule"/>
</dbReference>
<dbReference type="GO" id="GO:0046872">
    <property type="term" value="F:metal ion binding"/>
    <property type="evidence" value="ECO:0007669"/>
    <property type="project" value="UniProtKB-KW"/>
</dbReference>
<dbReference type="GO" id="GO:0004550">
    <property type="term" value="F:nucleoside diphosphate kinase activity"/>
    <property type="evidence" value="ECO:0007669"/>
    <property type="project" value="UniProtKB-UniRule"/>
</dbReference>
<dbReference type="GO" id="GO:0006241">
    <property type="term" value="P:CTP biosynthetic process"/>
    <property type="evidence" value="ECO:0007669"/>
    <property type="project" value="UniProtKB-UniRule"/>
</dbReference>
<dbReference type="GO" id="GO:0006183">
    <property type="term" value="P:GTP biosynthetic process"/>
    <property type="evidence" value="ECO:0007669"/>
    <property type="project" value="UniProtKB-UniRule"/>
</dbReference>
<dbReference type="GO" id="GO:0006228">
    <property type="term" value="P:UTP biosynthetic process"/>
    <property type="evidence" value="ECO:0007669"/>
    <property type="project" value="UniProtKB-UniRule"/>
</dbReference>
<dbReference type="CDD" id="cd04413">
    <property type="entry name" value="NDPk_I"/>
    <property type="match status" value="1"/>
</dbReference>
<dbReference type="FunFam" id="3.30.70.141:FF:000003">
    <property type="entry name" value="Nucleoside diphosphate kinase"/>
    <property type="match status" value="1"/>
</dbReference>
<dbReference type="Gene3D" id="3.30.70.141">
    <property type="entry name" value="Nucleoside diphosphate kinase-like domain"/>
    <property type="match status" value="1"/>
</dbReference>
<dbReference type="HAMAP" id="MF_00451">
    <property type="entry name" value="NDP_kinase"/>
    <property type="match status" value="1"/>
</dbReference>
<dbReference type="InterPro" id="IPR034907">
    <property type="entry name" value="NDK-like_dom"/>
</dbReference>
<dbReference type="InterPro" id="IPR036850">
    <property type="entry name" value="NDK-like_dom_sf"/>
</dbReference>
<dbReference type="InterPro" id="IPR001564">
    <property type="entry name" value="Nucleoside_diP_kinase"/>
</dbReference>
<dbReference type="InterPro" id="IPR023005">
    <property type="entry name" value="Nucleoside_diP_kinase_AS"/>
</dbReference>
<dbReference type="NCBIfam" id="NF001908">
    <property type="entry name" value="PRK00668.1"/>
    <property type="match status" value="1"/>
</dbReference>
<dbReference type="PANTHER" id="PTHR11349">
    <property type="entry name" value="NUCLEOSIDE DIPHOSPHATE KINASE"/>
    <property type="match status" value="1"/>
</dbReference>
<dbReference type="Pfam" id="PF00334">
    <property type="entry name" value="NDK"/>
    <property type="match status" value="1"/>
</dbReference>
<dbReference type="PRINTS" id="PR01243">
    <property type="entry name" value="NUCDPKINASE"/>
</dbReference>
<dbReference type="SMART" id="SM00562">
    <property type="entry name" value="NDK"/>
    <property type="match status" value="1"/>
</dbReference>
<dbReference type="SUPFAM" id="SSF54919">
    <property type="entry name" value="Nucleoside diphosphate kinase, NDK"/>
    <property type="match status" value="1"/>
</dbReference>
<dbReference type="PROSITE" id="PS00469">
    <property type="entry name" value="NDPK"/>
    <property type="match status" value="1"/>
</dbReference>
<dbReference type="PROSITE" id="PS51374">
    <property type="entry name" value="NDPK_LIKE"/>
    <property type="match status" value="1"/>
</dbReference>
<organism>
    <name type="scientific">Clostridium perfringens (strain 13 / Type A)</name>
    <dbReference type="NCBI Taxonomy" id="195102"/>
    <lineage>
        <taxon>Bacteria</taxon>
        <taxon>Bacillati</taxon>
        <taxon>Bacillota</taxon>
        <taxon>Clostridia</taxon>
        <taxon>Eubacteriales</taxon>
        <taxon>Clostridiaceae</taxon>
        <taxon>Clostridium</taxon>
    </lineage>
</organism>
<protein>
    <recommendedName>
        <fullName evidence="1">Nucleoside diphosphate kinase</fullName>
        <shortName evidence="1">NDK</shortName>
        <shortName evidence="1">NDP kinase</shortName>
        <ecNumber evidence="1">2.7.4.6</ecNumber>
    </recommendedName>
    <alternativeName>
        <fullName evidence="1">Nucleoside-2-P kinase</fullName>
    </alternativeName>
</protein>
<accession>Q8XIZ1</accession>
<reference key="1">
    <citation type="journal article" date="2002" name="Proc. Natl. Acad. Sci. U.S.A.">
        <title>Complete genome sequence of Clostridium perfringens, an anaerobic flesh-eater.</title>
        <authorList>
            <person name="Shimizu T."/>
            <person name="Ohtani K."/>
            <person name="Hirakawa H."/>
            <person name="Ohshima K."/>
            <person name="Yamashita A."/>
            <person name="Shiba T."/>
            <person name="Ogasawara N."/>
            <person name="Hattori M."/>
            <person name="Kuhara S."/>
            <person name="Hayashi H."/>
        </authorList>
    </citation>
    <scope>NUCLEOTIDE SEQUENCE [LARGE SCALE GENOMIC DNA]</scope>
    <source>
        <strain>13 / Type A</strain>
    </source>
</reference>
<feature type="chain" id="PRO_0000136970" description="Nucleoside diphosphate kinase">
    <location>
        <begin position="1"/>
        <end position="143"/>
    </location>
</feature>
<feature type="active site" description="Pros-phosphohistidine intermediate" evidence="1">
    <location>
        <position position="117"/>
    </location>
</feature>
<feature type="binding site" evidence="1">
    <location>
        <position position="11"/>
    </location>
    <ligand>
        <name>ATP</name>
        <dbReference type="ChEBI" id="CHEBI:30616"/>
    </ligand>
</feature>
<feature type="binding site" evidence="1">
    <location>
        <position position="59"/>
    </location>
    <ligand>
        <name>ATP</name>
        <dbReference type="ChEBI" id="CHEBI:30616"/>
    </ligand>
</feature>
<feature type="binding site" evidence="1">
    <location>
        <position position="87"/>
    </location>
    <ligand>
        <name>ATP</name>
        <dbReference type="ChEBI" id="CHEBI:30616"/>
    </ligand>
</feature>
<feature type="binding site" evidence="1">
    <location>
        <position position="93"/>
    </location>
    <ligand>
        <name>ATP</name>
        <dbReference type="ChEBI" id="CHEBI:30616"/>
    </ligand>
</feature>
<feature type="binding site" evidence="1">
    <location>
        <position position="104"/>
    </location>
    <ligand>
        <name>ATP</name>
        <dbReference type="ChEBI" id="CHEBI:30616"/>
    </ligand>
</feature>
<feature type="binding site" evidence="1">
    <location>
        <position position="114"/>
    </location>
    <ligand>
        <name>ATP</name>
        <dbReference type="ChEBI" id="CHEBI:30616"/>
    </ligand>
</feature>
<gene>
    <name evidence="1" type="primary">ndk</name>
    <name type="ordered locus">CPE1972</name>
</gene>
<keyword id="KW-0067">ATP-binding</keyword>
<keyword id="KW-0963">Cytoplasm</keyword>
<keyword id="KW-0418">Kinase</keyword>
<keyword id="KW-0460">Magnesium</keyword>
<keyword id="KW-0479">Metal-binding</keyword>
<keyword id="KW-0546">Nucleotide metabolism</keyword>
<keyword id="KW-0547">Nucleotide-binding</keyword>
<keyword id="KW-0597">Phosphoprotein</keyword>
<keyword id="KW-1185">Reference proteome</keyword>
<keyword id="KW-0808">Transferase</keyword>
<comment type="function">
    <text evidence="1">Major role in the synthesis of nucleoside triphosphates other than ATP. The ATP gamma phosphate is transferred to the NDP beta phosphate via a ping-pong mechanism, using a phosphorylated active-site intermediate.</text>
</comment>
<comment type="catalytic activity">
    <reaction evidence="1">
        <text>a 2'-deoxyribonucleoside 5'-diphosphate + ATP = a 2'-deoxyribonucleoside 5'-triphosphate + ADP</text>
        <dbReference type="Rhea" id="RHEA:44640"/>
        <dbReference type="ChEBI" id="CHEBI:30616"/>
        <dbReference type="ChEBI" id="CHEBI:61560"/>
        <dbReference type="ChEBI" id="CHEBI:73316"/>
        <dbReference type="ChEBI" id="CHEBI:456216"/>
        <dbReference type="EC" id="2.7.4.6"/>
    </reaction>
</comment>
<comment type="catalytic activity">
    <reaction evidence="1">
        <text>a ribonucleoside 5'-diphosphate + ATP = a ribonucleoside 5'-triphosphate + ADP</text>
        <dbReference type="Rhea" id="RHEA:18113"/>
        <dbReference type="ChEBI" id="CHEBI:30616"/>
        <dbReference type="ChEBI" id="CHEBI:57930"/>
        <dbReference type="ChEBI" id="CHEBI:61557"/>
        <dbReference type="ChEBI" id="CHEBI:456216"/>
        <dbReference type="EC" id="2.7.4.6"/>
    </reaction>
</comment>
<comment type="cofactor">
    <cofactor evidence="1">
        <name>Mg(2+)</name>
        <dbReference type="ChEBI" id="CHEBI:18420"/>
    </cofactor>
</comment>
<comment type="subunit">
    <text evidence="1">Homotetramer.</text>
</comment>
<comment type="subcellular location">
    <subcellularLocation>
        <location evidence="1">Cytoplasm</location>
    </subcellularLocation>
</comment>
<comment type="similarity">
    <text evidence="1">Belongs to the NDK family.</text>
</comment>
<name>NDK_CLOPE</name>